<feature type="chain" id="PRO_0000298369" description="Disulfide bond formation protein B">
    <location>
        <begin position="1"/>
        <end position="166"/>
    </location>
</feature>
<feature type="topological domain" description="Cytoplasmic" evidence="1">
    <location>
        <begin position="1"/>
        <end position="11"/>
    </location>
</feature>
<feature type="transmembrane region" description="Helical" evidence="1">
    <location>
        <begin position="12"/>
        <end position="28"/>
    </location>
</feature>
<feature type="topological domain" description="Periplasmic" evidence="1">
    <location>
        <begin position="29"/>
        <end position="46"/>
    </location>
</feature>
<feature type="transmembrane region" description="Helical" evidence="1">
    <location>
        <begin position="47"/>
        <end position="63"/>
    </location>
</feature>
<feature type="topological domain" description="Cytoplasmic" evidence="1">
    <location>
        <begin position="64"/>
        <end position="69"/>
    </location>
</feature>
<feature type="transmembrane region" description="Helical" evidence="1">
    <location>
        <begin position="70"/>
        <end position="87"/>
    </location>
</feature>
<feature type="topological domain" description="Periplasmic" evidence="1">
    <location>
        <begin position="88"/>
        <end position="144"/>
    </location>
</feature>
<feature type="transmembrane region" description="Helical" evidence="1">
    <location>
        <begin position="145"/>
        <end position="163"/>
    </location>
</feature>
<feature type="topological domain" description="Cytoplasmic" evidence="1">
    <location>
        <begin position="164"/>
        <end position="166"/>
    </location>
</feature>
<feature type="disulfide bond" description="Redox-active" evidence="1">
    <location>
        <begin position="38"/>
        <end position="41"/>
    </location>
</feature>
<feature type="disulfide bond" description="Redox-active" evidence="1">
    <location>
        <begin position="103"/>
        <end position="130"/>
    </location>
</feature>
<organism>
    <name type="scientific">Methylobacillus flagellatus (strain ATCC 51484 / DSM 6875 / VKM B-1610 / KT)</name>
    <dbReference type="NCBI Taxonomy" id="265072"/>
    <lineage>
        <taxon>Bacteria</taxon>
        <taxon>Pseudomonadati</taxon>
        <taxon>Pseudomonadota</taxon>
        <taxon>Betaproteobacteria</taxon>
        <taxon>Nitrosomonadales</taxon>
        <taxon>Methylophilaceae</taxon>
        <taxon>Methylobacillus</taxon>
    </lineage>
</organism>
<comment type="function">
    <text evidence="1">Required for disulfide bond formation in some periplasmic proteins. Acts by oxidizing the DsbA protein.</text>
</comment>
<comment type="subcellular location">
    <subcellularLocation>
        <location evidence="1">Cell inner membrane</location>
        <topology evidence="1">Multi-pass membrane protein</topology>
    </subcellularLocation>
</comment>
<comment type="similarity">
    <text evidence="1">Belongs to the DsbB family.</text>
</comment>
<dbReference type="EMBL" id="CP000284">
    <property type="protein sequence ID" value="ABE50129.1"/>
    <property type="molecule type" value="Genomic_DNA"/>
</dbReference>
<dbReference type="RefSeq" id="WP_011480083.1">
    <property type="nucleotide sequence ID" value="NC_007947.1"/>
</dbReference>
<dbReference type="STRING" id="265072.Mfla_1862"/>
<dbReference type="KEGG" id="mfa:Mfla_1862"/>
<dbReference type="eggNOG" id="COG1495">
    <property type="taxonomic scope" value="Bacteria"/>
</dbReference>
<dbReference type="HOGENOM" id="CLU_098660_1_1_4"/>
<dbReference type="OrthoDB" id="3711263at2"/>
<dbReference type="Proteomes" id="UP000002440">
    <property type="component" value="Chromosome"/>
</dbReference>
<dbReference type="GO" id="GO:0005886">
    <property type="term" value="C:plasma membrane"/>
    <property type="evidence" value="ECO:0007669"/>
    <property type="project" value="UniProtKB-SubCell"/>
</dbReference>
<dbReference type="GO" id="GO:0009055">
    <property type="term" value="F:electron transfer activity"/>
    <property type="evidence" value="ECO:0007669"/>
    <property type="project" value="UniProtKB-UniRule"/>
</dbReference>
<dbReference type="GO" id="GO:0015035">
    <property type="term" value="F:protein-disulfide reductase activity"/>
    <property type="evidence" value="ECO:0007669"/>
    <property type="project" value="UniProtKB-UniRule"/>
</dbReference>
<dbReference type="GO" id="GO:0006457">
    <property type="term" value="P:protein folding"/>
    <property type="evidence" value="ECO:0007669"/>
    <property type="project" value="InterPro"/>
</dbReference>
<dbReference type="Gene3D" id="1.20.1550.10">
    <property type="entry name" value="DsbB-like"/>
    <property type="match status" value="1"/>
</dbReference>
<dbReference type="HAMAP" id="MF_00286">
    <property type="entry name" value="DsbB"/>
    <property type="match status" value="1"/>
</dbReference>
<dbReference type="InterPro" id="IPR003752">
    <property type="entry name" value="DiS_bond_form_DsbB/BdbC"/>
</dbReference>
<dbReference type="InterPro" id="IPR022920">
    <property type="entry name" value="Disulphide_bond_form_DsbB"/>
</dbReference>
<dbReference type="InterPro" id="IPR050183">
    <property type="entry name" value="DsbB"/>
</dbReference>
<dbReference type="InterPro" id="IPR023380">
    <property type="entry name" value="DsbB-like_sf"/>
</dbReference>
<dbReference type="NCBIfam" id="NF003354">
    <property type="entry name" value="PRK04388.1"/>
    <property type="match status" value="1"/>
</dbReference>
<dbReference type="PANTHER" id="PTHR36570">
    <property type="entry name" value="DISULFIDE BOND FORMATION PROTEIN B"/>
    <property type="match status" value="1"/>
</dbReference>
<dbReference type="PANTHER" id="PTHR36570:SF3">
    <property type="entry name" value="DISULFIDE BOND FORMATION PROTEIN B"/>
    <property type="match status" value="1"/>
</dbReference>
<dbReference type="Pfam" id="PF02600">
    <property type="entry name" value="DsbB"/>
    <property type="match status" value="1"/>
</dbReference>
<dbReference type="SUPFAM" id="SSF158442">
    <property type="entry name" value="DsbB-like"/>
    <property type="match status" value="1"/>
</dbReference>
<evidence type="ECO:0000255" key="1">
    <source>
        <dbReference type="HAMAP-Rule" id="MF_00286"/>
    </source>
</evidence>
<keyword id="KW-0997">Cell inner membrane</keyword>
<keyword id="KW-1003">Cell membrane</keyword>
<keyword id="KW-0143">Chaperone</keyword>
<keyword id="KW-1015">Disulfide bond</keyword>
<keyword id="KW-0249">Electron transport</keyword>
<keyword id="KW-0472">Membrane</keyword>
<keyword id="KW-0560">Oxidoreductase</keyword>
<keyword id="KW-0676">Redox-active center</keyword>
<keyword id="KW-1185">Reference proteome</keyword>
<keyword id="KW-0812">Transmembrane</keyword>
<keyword id="KW-1133">Transmembrane helix</keyword>
<keyword id="KW-0813">Transport</keyword>
<sequence>MCNKLFAGRRGYFLGFVASFGLVGLALFLQQKYNLEPCPLCISQRIAFMALGILFLLAALHNPGRVGRKVYGLLHVIAAATGIGIAARHIWIQANPDKVMAECGAGFDYIMETFPLKKALDLIFKGTGECSAIDWTLFGLTIPQLSLIAFVGLGLFAVLLAFHKKA</sequence>
<protein>
    <recommendedName>
        <fullName evidence="1">Disulfide bond formation protein B</fullName>
    </recommendedName>
    <alternativeName>
        <fullName evidence="1">Disulfide oxidoreductase</fullName>
    </alternativeName>
</protein>
<reference key="1">
    <citation type="submission" date="2006-03" db="EMBL/GenBank/DDBJ databases">
        <title>Complete sequence of Methylobacillus flagellatus KT.</title>
        <authorList>
            <consortium name="US DOE Joint Genome Institute"/>
            <person name="Copeland A."/>
            <person name="Lucas S."/>
            <person name="Lapidus A."/>
            <person name="Barry K."/>
            <person name="Detter J.C."/>
            <person name="Glavina del Rio T."/>
            <person name="Hammon N."/>
            <person name="Israni S."/>
            <person name="Dalin E."/>
            <person name="Tice H."/>
            <person name="Pitluck S."/>
            <person name="Brettin T."/>
            <person name="Bruce D."/>
            <person name="Han C."/>
            <person name="Tapia R."/>
            <person name="Saunders E."/>
            <person name="Gilna P."/>
            <person name="Schmutz J."/>
            <person name="Larimer F."/>
            <person name="Land M."/>
            <person name="Kyrpides N."/>
            <person name="Anderson I."/>
            <person name="Richardson P."/>
        </authorList>
    </citation>
    <scope>NUCLEOTIDE SEQUENCE [LARGE SCALE GENOMIC DNA]</scope>
    <source>
        <strain>ATCC 51484 / DSM 6875 / VKM B-1610 / KT</strain>
    </source>
</reference>
<accession>Q1H058</accession>
<name>DSBB_METFK</name>
<proteinExistence type="inferred from homology"/>
<gene>
    <name evidence="1" type="primary">dsbB</name>
    <name type="ordered locus">Mfla_1862</name>
</gene>